<gene>
    <name type="ordered locus">MPN_500</name>
    <name type="ORF">MP343</name>
    <name type="ORF">P02_orf527V</name>
</gene>
<dbReference type="EMBL" id="U00089">
    <property type="protein sequence ID" value="AAB95990.1"/>
    <property type="molecule type" value="Genomic_DNA"/>
</dbReference>
<dbReference type="PIR" id="S73669">
    <property type="entry name" value="S73669"/>
</dbReference>
<dbReference type="RefSeq" id="NP_110188.1">
    <property type="nucleotide sequence ID" value="NC_000912.1"/>
</dbReference>
<dbReference type="SMR" id="P75287"/>
<dbReference type="STRING" id="272634.MPN_500"/>
<dbReference type="EnsemblBacteria" id="AAB95990">
    <property type="protein sequence ID" value="AAB95990"/>
    <property type="gene ID" value="MPN_500"/>
</dbReference>
<dbReference type="KEGG" id="mpn:MPN_500"/>
<dbReference type="PATRIC" id="fig|272634.6.peg.545"/>
<dbReference type="HOGENOM" id="CLU_022417_1_0_14"/>
<dbReference type="OrthoDB" id="403686at2"/>
<dbReference type="BioCyc" id="MPNE272634:G1GJ3-819-MONOMER"/>
<dbReference type="Proteomes" id="UP000000808">
    <property type="component" value="Chromosome"/>
</dbReference>
<dbReference type="InterPro" id="IPR004940">
    <property type="entry name" value="Adhesin_P1_C"/>
</dbReference>
<dbReference type="Pfam" id="PF03257">
    <property type="entry name" value="Adhesin_P1_C"/>
    <property type="match status" value="1"/>
</dbReference>
<accession>P75287</accession>
<organism>
    <name type="scientific">Mycoplasma pneumoniae (strain ATCC 29342 / M129 / Subtype 1)</name>
    <name type="common">Mycoplasmoides pneumoniae</name>
    <dbReference type="NCBI Taxonomy" id="272634"/>
    <lineage>
        <taxon>Bacteria</taxon>
        <taxon>Bacillati</taxon>
        <taxon>Mycoplasmatota</taxon>
        <taxon>Mycoplasmoidales</taxon>
        <taxon>Mycoplasmoidaceae</taxon>
        <taxon>Mycoplasmoides</taxon>
    </lineage>
</organism>
<reference key="1">
    <citation type="journal article" date="1996" name="Nucleic Acids Res.">
        <title>Complete sequence analysis of the genome of the bacterium Mycoplasma pneumoniae.</title>
        <authorList>
            <person name="Himmelreich R."/>
            <person name="Hilbert H."/>
            <person name="Plagens H."/>
            <person name="Pirkl E."/>
            <person name="Li B.-C."/>
            <person name="Herrmann R."/>
        </authorList>
    </citation>
    <scope>NUCLEOTIDE SEQUENCE [LARGE SCALE GENOMIC DNA]</scope>
    <source>
        <strain>ATCC 29342 / M129 / Subtype 1</strain>
    </source>
</reference>
<keyword id="KW-1185">Reference proteome</keyword>
<proteinExistence type="uncertain"/>
<feature type="chain" id="PRO_0000210716" description="Putative adhesin P1-like protein MPN_500">
    <location>
        <begin position="1"/>
        <end position="527"/>
    </location>
</feature>
<feature type="region of interest" description="Disordered" evidence="1">
    <location>
        <begin position="1"/>
        <end position="26"/>
    </location>
</feature>
<feature type="region of interest" description="Disordered" evidence="1">
    <location>
        <begin position="76"/>
        <end position="148"/>
    </location>
</feature>
<feature type="region of interest" description="Disordered" evidence="1">
    <location>
        <begin position="248"/>
        <end position="269"/>
    </location>
</feature>
<feature type="region of interest" description="Disordered" evidence="1">
    <location>
        <begin position="468"/>
        <end position="527"/>
    </location>
</feature>
<feature type="compositionally biased region" description="Low complexity" evidence="1">
    <location>
        <begin position="9"/>
        <end position="26"/>
    </location>
</feature>
<feature type="compositionally biased region" description="Polar residues" evidence="1">
    <location>
        <begin position="82"/>
        <end position="95"/>
    </location>
</feature>
<feature type="compositionally biased region" description="Low complexity" evidence="1">
    <location>
        <begin position="108"/>
        <end position="117"/>
    </location>
</feature>
<feature type="compositionally biased region" description="Polar residues" evidence="1">
    <location>
        <begin position="128"/>
        <end position="148"/>
    </location>
</feature>
<feature type="compositionally biased region" description="Low complexity" evidence="1">
    <location>
        <begin position="248"/>
        <end position="262"/>
    </location>
</feature>
<feature type="compositionally biased region" description="Polar residues" evidence="1">
    <location>
        <begin position="468"/>
        <end position="495"/>
    </location>
</feature>
<feature type="compositionally biased region" description="Gly residues" evidence="1">
    <location>
        <begin position="500"/>
        <end position="513"/>
    </location>
</feature>
<name>Y500_MYCPN</name>
<comment type="similarity">
    <text evidence="2">Belongs to the adhesin P1 family.</text>
</comment>
<comment type="caution">
    <text evidence="2">Could be the product of a pseudogene.</text>
</comment>
<sequence>MDDITAPQTSAGSSSGTSTNTSGSRSFLPTFSNVGVGLKANVQGTLGGRQTTTTGNNIPKWATLDQANLQLWTGAGWRNDKTTSGSTGNANDTKFTSATGSGSGQGSSSGTNTSAGNPDGLQADKVDQNGQVKTSVQEATSGDNLTNYTNLPPANLTPTADWPNALSFTNKNNAQRAQLFLRGLLGSIPVLVNKSGQDDNSKFKAEDQKWSYTDLQSDQTKLNLPAYGEVNGLLNPALVETYFGNTRASGSGSNTTSSPGIGFKIPEQSGTNTTSKAVLITPGLAWTPQDVGNIVVSGTSFSFQLGGWLVTFTDFIKPRAGYLGLQLTGLDVSEATQRELIWAKRPWAAFRGSWVNRLGRVESVWDFKGVWADQAQLAAQAATSSTTTTATGATLPEHPNALAYQISYTDKDSYKASTQGSGQTNSQNNSPYLHFIKPKKVESTTQLDQGLKNLLDPNQVRTKLRQSFGTDHSTQPQPQSLKTTTPVFGRSSGNLSSVFSGGGAGGGSSGSGQSGVDLSPVERVSGH</sequence>
<evidence type="ECO:0000256" key="1">
    <source>
        <dbReference type="SAM" id="MobiDB-lite"/>
    </source>
</evidence>
<evidence type="ECO:0000305" key="2"/>
<protein>
    <recommendedName>
        <fullName>Putative adhesin P1-like protein MPN_500</fullName>
    </recommendedName>
</protein>